<sequence length="310" mass="34111">MTAPVLCIMGPTAVGKSELALSLAERLGGEIVSVDSAQIYRGLDIGTAKPSPAVRARCPHHLIDIRDPAERYSAAEFARDAQAAIAAIRSRGRLPVLVGGTGLYFQALQHGLSPMPAADAQVRAELEAEEAAYGVQALHRRLQAVDPESAARLHPNDSQRIQRALEVHRLTGRPLSQVQREPGQPGLTEMPLKIILEPPERAWLHRRIEARFRAMLAAGLVGEVVALHRRGDLSEELPAVRAVGYRQIWHYLEGACDYRTMIRRGLRATRQYAKRQITWLRGQTDGVRFTADDRLEAQVHSYVTGALGGV</sequence>
<feature type="chain" id="PRO_0000377181" description="tRNA dimethylallyltransferase">
    <location>
        <begin position="1"/>
        <end position="310"/>
    </location>
</feature>
<feature type="region of interest" description="Interaction with substrate tRNA" evidence="1">
    <location>
        <begin position="35"/>
        <end position="38"/>
    </location>
</feature>
<feature type="region of interest" description="Interaction with substrate tRNA" evidence="1">
    <location>
        <begin position="159"/>
        <end position="163"/>
    </location>
</feature>
<feature type="region of interest" description="Interaction with substrate tRNA" evidence="1">
    <location>
        <begin position="274"/>
        <end position="281"/>
    </location>
</feature>
<feature type="binding site" evidence="1">
    <location>
        <begin position="10"/>
        <end position="17"/>
    </location>
    <ligand>
        <name>ATP</name>
        <dbReference type="ChEBI" id="CHEBI:30616"/>
    </ligand>
</feature>
<feature type="binding site" evidence="1">
    <location>
        <begin position="12"/>
        <end position="17"/>
    </location>
    <ligand>
        <name>substrate</name>
    </ligand>
</feature>
<feature type="site" description="Interaction with substrate tRNA" evidence="1">
    <location>
        <position position="101"/>
    </location>
</feature>
<feature type="site" description="Interaction with substrate tRNA" evidence="1">
    <location>
        <position position="123"/>
    </location>
</feature>
<gene>
    <name evidence="1" type="primary">miaA</name>
    <name type="ordered locus">Hhal_0667</name>
</gene>
<organism>
    <name type="scientific">Halorhodospira halophila (strain DSM 244 / SL1)</name>
    <name type="common">Ectothiorhodospira halophila (strain DSM 244 / SL1)</name>
    <dbReference type="NCBI Taxonomy" id="349124"/>
    <lineage>
        <taxon>Bacteria</taxon>
        <taxon>Pseudomonadati</taxon>
        <taxon>Pseudomonadota</taxon>
        <taxon>Gammaproteobacteria</taxon>
        <taxon>Chromatiales</taxon>
        <taxon>Ectothiorhodospiraceae</taxon>
        <taxon>Halorhodospira</taxon>
    </lineage>
</organism>
<name>MIAA_HALHL</name>
<protein>
    <recommendedName>
        <fullName evidence="1">tRNA dimethylallyltransferase</fullName>
        <ecNumber evidence="1">2.5.1.75</ecNumber>
    </recommendedName>
    <alternativeName>
        <fullName evidence="1">Dimethylallyl diphosphate:tRNA dimethylallyltransferase</fullName>
        <shortName evidence="1">DMAPP:tRNA dimethylallyltransferase</shortName>
        <shortName evidence="1">DMATase</shortName>
    </alternativeName>
    <alternativeName>
        <fullName evidence="1">Isopentenyl-diphosphate:tRNA isopentenyltransferase</fullName>
        <shortName evidence="1">IPP transferase</shortName>
        <shortName evidence="1">IPPT</shortName>
        <shortName evidence="1">IPTase</shortName>
    </alternativeName>
</protein>
<evidence type="ECO:0000255" key="1">
    <source>
        <dbReference type="HAMAP-Rule" id="MF_00185"/>
    </source>
</evidence>
<reference key="1">
    <citation type="submission" date="2006-12" db="EMBL/GenBank/DDBJ databases">
        <title>Complete sequence of Halorhodospira halophila SL1.</title>
        <authorList>
            <consortium name="US DOE Joint Genome Institute"/>
            <person name="Copeland A."/>
            <person name="Lucas S."/>
            <person name="Lapidus A."/>
            <person name="Barry K."/>
            <person name="Detter J.C."/>
            <person name="Glavina del Rio T."/>
            <person name="Hammon N."/>
            <person name="Israni S."/>
            <person name="Dalin E."/>
            <person name="Tice H."/>
            <person name="Pitluck S."/>
            <person name="Saunders E."/>
            <person name="Brettin T."/>
            <person name="Bruce D."/>
            <person name="Han C."/>
            <person name="Tapia R."/>
            <person name="Schmutz J."/>
            <person name="Larimer F."/>
            <person name="Land M."/>
            <person name="Hauser L."/>
            <person name="Kyrpides N."/>
            <person name="Mikhailova N."/>
            <person name="Hoff W."/>
            <person name="Richardson P."/>
        </authorList>
    </citation>
    <scope>NUCLEOTIDE SEQUENCE [LARGE SCALE GENOMIC DNA]</scope>
    <source>
        <strain>DSM 244 / SL1</strain>
    </source>
</reference>
<proteinExistence type="inferred from homology"/>
<comment type="function">
    <text evidence="1">Catalyzes the transfer of a dimethylallyl group onto the adenine at position 37 in tRNAs that read codons beginning with uridine, leading to the formation of N6-(dimethylallyl)adenosine (i(6)A).</text>
</comment>
<comment type="catalytic activity">
    <reaction evidence="1">
        <text>adenosine(37) in tRNA + dimethylallyl diphosphate = N(6)-dimethylallyladenosine(37) in tRNA + diphosphate</text>
        <dbReference type="Rhea" id="RHEA:26482"/>
        <dbReference type="Rhea" id="RHEA-COMP:10162"/>
        <dbReference type="Rhea" id="RHEA-COMP:10375"/>
        <dbReference type="ChEBI" id="CHEBI:33019"/>
        <dbReference type="ChEBI" id="CHEBI:57623"/>
        <dbReference type="ChEBI" id="CHEBI:74411"/>
        <dbReference type="ChEBI" id="CHEBI:74415"/>
        <dbReference type="EC" id="2.5.1.75"/>
    </reaction>
</comment>
<comment type="cofactor">
    <cofactor evidence="1">
        <name>Mg(2+)</name>
        <dbReference type="ChEBI" id="CHEBI:18420"/>
    </cofactor>
</comment>
<comment type="subunit">
    <text evidence="1">Monomer.</text>
</comment>
<comment type="similarity">
    <text evidence="1">Belongs to the IPP transferase family.</text>
</comment>
<dbReference type="EC" id="2.5.1.75" evidence="1"/>
<dbReference type="EMBL" id="CP000544">
    <property type="protein sequence ID" value="ABM61449.1"/>
    <property type="molecule type" value="Genomic_DNA"/>
</dbReference>
<dbReference type="RefSeq" id="WP_011813472.1">
    <property type="nucleotide sequence ID" value="NC_008789.1"/>
</dbReference>
<dbReference type="SMR" id="A1WUT7"/>
<dbReference type="STRING" id="349124.Hhal_0667"/>
<dbReference type="KEGG" id="hha:Hhal_0667"/>
<dbReference type="eggNOG" id="COG0324">
    <property type="taxonomic scope" value="Bacteria"/>
</dbReference>
<dbReference type="HOGENOM" id="CLU_032616_0_0_6"/>
<dbReference type="OrthoDB" id="9776390at2"/>
<dbReference type="Proteomes" id="UP000000647">
    <property type="component" value="Chromosome"/>
</dbReference>
<dbReference type="GO" id="GO:0005524">
    <property type="term" value="F:ATP binding"/>
    <property type="evidence" value="ECO:0007669"/>
    <property type="project" value="UniProtKB-UniRule"/>
</dbReference>
<dbReference type="GO" id="GO:0052381">
    <property type="term" value="F:tRNA dimethylallyltransferase activity"/>
    <property type="evidence" value="ECO:0007669"/>
    <property type="project" value="UniProtKB-UniRule"/>
</dbReference>
<dbReference type="GO" id="GO:0006400">
    <property type="term" value="P:tRNA modification"/>
    <property type="evidence" value="ECO:0007669"/>
    <property type="project" value="TreeGrafter"/>
</dbReference>
<dbReference type="CDD" id="cd02019">
    <property type="entry name" value="NK"/>
    <property type="match status" value="1"/>
</dbReference>
<dbReference type="FunFam" id="1.10.20.140:FF:000001">
    <property type="entry name" value="tRNA dimethylallyltransferase"/>
    <property type="match status" value="1"/>
</dbReference>
<dbReference type="Gene3D" id="1.10.20.140">
    <property type="match status" value="1"/>
</dbReference>
<dbReference type="Gene3D" id="3.40.50.300">
    <property type="entry name" value="P-loop containing nucleotide triphosphate hydrolases"/>
    <property type="match status" value="1"/>
</dbReference>
<dbReference type="HAMAP" id="MF_00185">
    <property type="entry name" value="IPP_trans"/>
    <property type="match status" value="1"/>
</dbReference>
<dbReference type="InterPro" id="IPR039657">
    <property type="entry name" value="Dimethylallyltransferase"/>
</dbReference>
<dbReference type="InterPro" id="IPR018022">
    <property type="entry name" value="IPT"/>
</dbReference>
<dbReference type="InterPro" id="IPR027417">
    <property type="entry name" value="P-loop_NTPase"/>
</dbReference>
<dbReference type="NCBIfam" id="TIGR00174">
    <property type="entry name" value="miaA"/>
    <property type="match status" value="1"/>
</dbReference>
<dbReference type="PANTHER" id="PTHR11088">
    <property type="entry name" value="TRNA DIMETHYLALLYLTRANSFERASE"/>
    <property type="match status" value="1"/>
</dbReference>
<dbReference type="PANTHER" id="PTHR11088:SF60">
    <property type="entry name" value="TRNA DIMETHYLALLYLTRANSFERASE"/>
    <property type="match status" value="1"/>
</dbReference>
<dbReference type="Pfam" id="PF01715">
    <property type="entry name" value="IPPT"/>
    <property type="match status" value="1"/>
</dbReference>
<dbReference type="SUPFAM" id="SSF52540">
    <property type="entry name" value="P-loop containing nucleoside triphosphate hydrolases"/>
    <property type="match status" value="1"/>
</dbReference>
<accession>A1WUT7</accession>
<keyword id="KW-0067">ATP-binding</keyword>
<keyword id="KW-0460">Magnesium</keyword>
<keyword id="KW-0547">Nucleotide-binding</keyword>
<keyword id="KW-1185">Reference proteome</keyword>
<keyword id="KW-0808">Transferase</keyword>
<keyword id="KW-0819">tRNA processing</keyword>